<evidence type="ECO:0000255" key="1">
    <source>
        <dbReference type="HAMAP-Rule" id="MF_01361"/>
    </source>
</evidence>
<evidence type="ECO:0000305" key="2"/>
<keyword id="KW-1003">Cell membrane</keyword>
<keyword id="KW-0472">Membrane</keyword>
<keyword id="KW-1185">Reference proteome</keyword>
<keyword id="KW-0812">Transmembrane</keyword>
<keyword id="KW-1133">Transmembrane helix</keyword>
<proteinExistence type="inferred from homology"/>
<name>Y2720_RUEST</name>
<gene>
    <name type="ordered locus">TM1040_2720</name>
</gene>
<sequence>MLSWALAFLVIALIAAVFGFGGIASASAGIAQILFFIFLVMFVVALILRAVRG</sequence>
<dbReference type="EMBL" id="CP000377">
    <property type="protein sequence ID" value="ABF65452.1"/>
    <property type="status" value="ALT_INIT"/>
    <property type="molecule type" value="Genomic_DNA"/>
</dbReference>
<dbReference type="RefSeq" id="WP_044026923.1">
    <property type="nucleotide sequence ID" value="NC_008044.1"/>
</dbReference>
<dbReference type="STRING" id="292414.TM1040_2720"/>
<dbReference type="KEGG" id="sit:TM1040_2720"/>
<dbReference type="eggNOG" id="COG5487">
    <property type="taxonomic scope" value="Bacteria"/>
</dbReference>
<dbReference type="HOGENOM" id="CLU_187346_0_1_5"/>
<dbReference type="Proteomes" id="UP000000636">
    <property type="component" value="Chromosome"/>
</dbReference>
<dbReference type="GO" id="GO:0005886">
    <property type="term" value="C:plasma membrane"/>
    <property type="evidence" value="ECO:0007669"/>
    <property type="project" value="UniProtKB-SubCell"/>
</dbReference>
<dbReference type="HAMAP" id="MF_01361">
    <property type="entry name" value="UPF0391"/>
    <property type="match status" value="1"/>
</dbReference>
<dbReference type="InterPro" id="IPR009760">
    <property type="entry name" value="DUF1328"/>
</dbReference>
<dbReference type="NCBIfam" id="NF010226">
    <property type="entry name" value="PRK13682.1-1"/>
    <property type="match status" value="1"/>
</dbReference>
<dbReference type="NCBIfam" id="NF010228">
    <property type="entry name" value="PRK13682.1-3"/>
    <property type="match status" value="1"/>
</dbReference>
<dbReference type="NCBIfam" id="NF010229">
    <property type="entry name" value="PRK13682.1-4"/>
    <property type="match status" value="1"/>
</dbReference>
<dbReference type="Pfam" id="PF07043">
    <property type="entry name" value="DUF1328"/>
    <property type="match status" value="1"/>
</dbReference>
<dbReference type="PIRSF" id="PIRSF036466">
    <property type="entry name" value="UCP036466"/>
    <property type="match status" value="1"/>
</dbReference>
<protein>
    <recommendedName>
        <fullName evidence="1">UPF0391 membrane protein TM1040_2720</fullName>
    </recommendedName>
</protein>
<organism>
    <name type="scientific">Ruegeria sp. (strain TM1040)</name>
    <name type="common">Silicibacter sp.</name>
    <dbReference type="NCBI Taxonomy" id="292414"/>
    <lineage>
        <taxon>Bacteria</taxon>
        <taxon>Pseudomonadati</taxon>
        <taxon>Pseudomonadota</taxon>
        <taxon>Alphaproteobacteria</taxon>
        <taxon>Rhodobacterales</taxon>
        <taxon>Roseobacteraceae</taxon>
        <taxon>Ruegeria</taxon>
    </lineage>
</organism>
<reference key="1">
    <citation type="submission" date="2006-05" db="EMBL/GenBank/DDBJ databases">
        <title>Complete sequence of chromosome of Silicibacter sp. TM1040.</title>
        <authorList>
            <consortium name="US DOE Joint Genome Institute"/>
            <person name="Copeland A."/>
            <person name="Lucas S."/>
            <person name="Lapidus A."/>
            <person name="Barry K."/>
            <person name="Detter J.C."/>
            <person name="Glavina del Rio T."/>
            <person name="Hammon N."/>
            <person name="Israni S."/>
            <person name="Dalin E."/>
            <person name="Tice H."/>
            <person name="Pitluck S."/>
            <person name="Brettin T."/>
            <person name="Bruce D."/>
            <person name="Han C."/>
            <person name="Tapia R."/>
            <person name="Goodwin L."/>
            <person name="Thompson L.S."/>
            <person name="Gilna P."/>
            <person name="Schmutz J."/>
            <person name="Larimer F."/>
            <person name="Land M."/>
            <person name="Hauser L."/>
            <person name="Kyrpides N."/>
            <person name="Kim E."/>
            <person name="Belas R."/>
            <person name="Moran M.A."/>
            <person name="Buchan A."/>
            <person name="Gonzalez J.M."/>
            <person name="Schell M.A."/>
            <person name="Sun F."/>
            <person name="Richardson P."/>
        </authorList>
    </citation>
    <scope>NUCLEOTIDE SEQUENCE [LARGE SCALE GENOMIC DNA]</scope>
    <source>
        <strain>TM1040</strain>
    </source>
</reference>
<feature type="chain" id="PRO_0000256790" description="UPF0391 membrane protein TM1040_2720">
    <location>
        <begin position="1"/>
        <end position="53"/>
    </location>
</feature>
<feature type="transmembrane region" description="Helical" evidence="1">
    <location>
        <begin position="4"/>
        <end position="24"/>
    </location>
</feature>
<feature type="transmembrane region" description="Helical" evidence="1">
    <location>
        <begin position="29"/>
        <end position="48"/>
    </location>
</feature>
<comment type="subcellular location">
    <subcellularLocation>
        <location evidence="1">Cell membrane</location>
        <topology evidence="1">Multi-pass membrane protein</topology>
    </subcellularLocation>
</comment>
<comment type="similarity">
    <text evidence="1">Belongs to the UPF0391 family.</text>
</comment>
<comment type="sequence caution" evidence="2">
    <conflict type="erroneous initiation">
        <sequence resource="EMBL-CDS" id="ABF65452"/>
    </conflict>
</comment>
<accession>Q1GD14</accession>